<keyword id="KW-0028">Amino-acid biosynthesis</keyword>
<keyword id="KW-0055">Arginine biosynthesis</keyword>
<keyword id="KW-0067">ATP-binding</keyword>
<keyword id="KW-0436">Ligase</keyword>
<keyword id="KW-0460">Magnesium</keyword>
<keyword id="KW-0464">Manganese</keyword>
<keyword id="KW-0479">Metal-binding</keyword>
<keyword id="KW-0547">Nucleotide-binding</keyword>
<keyword id="KW-0665">Pyrimidine biosynthesis</keyword>
<keyword id="KW-0677">Repeat</keyword>
<gene>
    <name evidence="1" type="primary">carB</name>
    <name type="ordered locus">SAK_1132</name>
</gene>
<dbReference type="EC" id="6.3.4.16" evidence="1"/>
<dbReference type="EC" id="6.3.5.5" evidence="1"/>
<dbReference type="EMBL" id="CP000114">
    <property type="protein sequence ID" value="ABA45859.1"/>
    <property type="molecule type" value="Genomic_DNA"/>
</dbReference>
<dbReference type="RefSeq" id="WP_001126458.1">
    <property type="nucleotide sequence ID" value="NC_007432.1"/>
</dbReference>
<dbReference type="SMR" id="Q3K150"/>
<dbReference type="KEGG" id="sak:SAK_1132"/>
<dbReference type="HOGENOM" id="CLU_000513_1_2_9"/>
<dbReference type="UniPathway" id="UPA00068">
    <property type="reaction ID" value="UER00171"/>
</dbReference>
<dbReference type="UniPathway" id="UPA00070">
    <property type="reaction ID" value="UER00115"/>
</dbReference>
<dbReference type="GO" id="GO:0005737">
    <property type="term" value="C:cytoplasm"/>
    <property type="evidence" value="ECO:0007669"/>
    <property type="project" value="TreeGrafter"/>
</dbReference>
<dbReference type="GO" id="GO:0005524">
    <property type="term" value="F:ATP binding"/>
    <property type="evidence" value="ECO:0007669"/>
    <property type="project" value="UniProtKB-UniRule"/>
</dbReference>
<dbReference type="GO" id="GO:0004087">
    <property type="term" value="F:carbamoyl-phosphate synthase (ammonia) activity"/>
    <property type="evidence" value="ECO:0007669"/>
    <property type="project" value="RHEA"/>
</dbReference>
<dbReference type="GO" id="GO:0004088">
    <property type="term" value="F:carbamoyl-phosphate synthase (glutamine-hydrolyzing) activity"/>
    <property type="evidence" value="ECO:0007669"/>
    <property type="project" value="UniProtKB-UniRule"/>
</dbReference>
<dbReference type="GO" id="GO:0046872">
    <property type="term" value="F:metal ion binding"/>
    <property type="evidence" value="ECO:0007669"/>
    <property type="project" value="UniProtKB-KW"/>
</dbReference>
<dbReference type="GO" id="GO:0044205">
    <property type="term" value="P:'de novo' UMP biosynthetic process"/>
    <property type="evidence" value="ECO:0007669"/>
    <property type="project" value="UniProtKB-UniRule"/>
</dbReference>
<dbReference type="GO" id="GO:0006541">
    <property type="term" value="P:glutamine metabolic process"/>
    <property type="evidence" value="ECO:0007669"/>
    <property type="project" value="TreeGrafter"/>
</dbReference>
<dbReference type="GO" id="GO:0006526">
    <property type="term" value="P:L-arginine biosynthetic process"/>
    <property type="evidence" value="ECO:0007669"/>
    <property type="project" value="UniProtKB-UniRule"/>
</dbReference>
<dbReference type="CDD" id="cd01424">
    <property type="entry name" value="MGS_CPS_II"/>
    <property type="match status" value="1"/>
</dbReference>
<dbReference type="FunFam" id="1.10.1030.10:FF:000002">
    <property type="entry name" value="Carbamoyl-phosphate synthase large chain"/>
    <property type="match status" value="1"/>
</dbReference>
<dbReference type="FunFam" id="3.30.1490.20:FF:000001">
    <property type="entry name" value="Carbamoyl-phosphate synthase large chain"/>
    <property type="match status" value="1"/>
</dbReference>
<dbReference type="FunFam" id="3.30.470.20:FF:000001">
    <property type="entry name" value="Carbamoyl-phosphate synthase large chain"/>
    <property type="match status" value="1"/>
</dbReference>
<dbReference type="FunFam" id="3.30.470.20:FF:000026">
    <property type="entry name" value="Carbamoyl-phosphate synthase large chain"/>
    <property type="match status" value="1"/>
</dbReference>
<dbReference type="FunFam" id="3.40.50.20:FF:000001">
    <property type="entry name" value="Carbamoyl-phosphate synthase large chain"/>
    <property type="match status" value="2"/>
</dbReference>
<dbReference type="Gene3D" id="3.40.50.20">
    <property type="match status" value="2"/>
</dbReference>
<dbReference type="Gene3D" id="3.30.1490.20">
    <property type="entry name" value="ATP-grasp fold, A domain"/>
    <property type="match status" value="1"/>
</dbReference>
<dbReference type="Gene3D" id="3.30.470.20">
    <property type="entry name" value="ATP-grasp fold, B domain"/>
    <property type="match status" value="2"/>
</dbReference>
<dbReference type="Gene3D" id="1.10.1030.10">
    <property type="entry name" value="Carbamoyl-phosphate synthetase, large subunit oligomerisation domain"/>
    <property type="match status" value="1"/>
</dbReference>
<dbReference type="Gene3D" id="3.40.50.1380">
    <property type="entry name" value="Methylglyoxal synthase-like domain"/>
    <property type="match status" value="1"/>
</dbReference>
<dbReference type="HAMAP" id="MF_01210_A">
    <property type="entry name" value="CPSase_L_chain_A"/>
    <property type="match status" value="1"/>
</dbReference>
<dbReference type="HAMAP" id="MF_01210_B">
    <property type="entry name" value="CPSase_L_chain_B"/>
    <property type="match status" value="1"/>
</dbReference>
<dbReference type="InterPro" id="IPR011761">
    <property type="entry name" value="ATP-grasp"/>
</dbReference>
<dbReference type="InterPro" id="IPR013815">
    <property type="entry name" value="ATP_grasp_subdomain_1"/>
</dbReference>
<dbReference type="InterPro" id="IPR006275">
    <property type="entry name" value="CarbamoylP_synth_lsu"/>
</dbReference>
<dbReference type="InterPro" id="IPR005480">
    <property type="entry name" value="CarbamoylP_synth_lsu_oligo"/>
</dbReference>
<dbReference type="InterPro" id="IPR036897">
    <property type="entry name" value="CarbamoylP_synth_lsu_oligo_sf"/>
</dbReference>
<dbReference type="InterPro" id="IPR005479">
    <property type="entry name" value="CbamoylP_synth_lsu-like_ATP-bd"/>
</dbReference>
<dbReference type="InterPro" id="IPR005483">
    <property type="entry name" value="CbamoylP_synth_lsu_CPSase_dom"/>
</dbReference>
<dbReference type="InterPro" id="IPR011607">
    <property type="entry name" value="MGS-like_dom"/>
</dbReference>
<dbReference type="InterPro" id="IPR036914">
    <property type="entry name" value="MGS-like_dom_sf"/>
</dbReference>
<dbReference type="InterPro" id="IPR033937">
    <property type="entry name" value="MGS_CPS_CarB"/>
</dbReference>
<dbReference type="InterPro" id="IPR016185">
    <property type="entry name" value="PreATP-grasp_dom_sf"/>
</dbReference>
<dbReference type="NCBIfam" id="TIGR01369">
    <property type="entry name" value="CPSaseII_lrg"/>
    <property type="match status" value="1"/>
</dbReference>
<dbReference type="NCBIfam" id="NF003671">
    <property type="entry name" value="PRK05294.1"/>
    <property type="match status" value="1"/>
</dbReference>
<dbReference type="NCBIfam" id="NF009455">
    <property type="entry name" value="PRK12815.1"/>
    <property type="match status" value="1"/>
</dbReference>
<dbReference type="PANTHER" id="PTHR11405:SF53">
    <property type="entry name" value="CARBAMOYL-PHOSPHATE SYNTHASE [AMMONIA], MITOCHONDRIAL"/>
    <property type="match status" value="1"/>
</dbReference>
<dbReference type="PANTHER" id="PTHR11405">
    <property type="entry name" value="CARBAMOYLTRANSFERASE FAMILY MEMBER"/>
    <property type="match status" value="1"/>
</dbReference>
<dbReference type="Pfam" id="PF02786">
    <property type="entry name" value="CPSase_L_D2"/>
    <property type="match status" value="2"/>
</dbReference>
<dbReference type="Pfam" id="PF02787">
    <property type="entry name" value="CPSase_L_D3"/>
    <property type="match status" value="1"/>
</dbReference>
<dbReference type="Pfam" id="PF02142">
    <property type="entry name" value="MGS"/>
    <property type="match status" value="1"/>
</dbReference>
<dbReference type="PRINTS" id="PR00098">
    <property type="entry name" value="CPSASE"/>
</dbReference>
<dbReference type="SMART" id="SM01096">
    <property type="entry name" value="CPSase_L_D3"/>
    <property type="match status" value="1"/>
</dbReference>
<dbReference type="SMART" id="SM01209">
    <property type="entry name" value="GARS_A"/>
    <property type="match status" value="1"/>
</dbReference>
<dbReference type="SMART" id="SM00851">
    <property type="entry name" value="MGS"/>
    <property type="match status" value="1"/>
</dbReference>
<dbReference type="SUPFAM" id="SSF48108">
    <property type="entry name" value="Carbamoyl phosphate synthetase, large subunit connection domain"/>
    <property type="match status" value="1"/>
</dbReference>
<dbReference type="SUPFAM" id="SSF56059">
    <property type="entry name" value="Glutathione synthetase ATP-binding domain-like"/>
    <property type="match status" value="2"/>
</dbReference>
<dbReference type="SUPFAM" id="SSF52335">
    <property type="entry name" value="Methylglyoxal synthase-like"/>
    <property type="match status" value="1"/>
</dbReference>
<dbReference type="SUPFAM" id="SSF52440">
    <property type="entry name" value="PreATP-grasp domain"/>
    <property type="match status" value="2"/>
</dbReference>
<dbReference type="PROSITE" id="PS50975">
    <property type="entry name" value="ATP_GRASP"/>
    <property type="match status" value="2"/>
</dbReference>
<dbReference type="PROSITE" id="PS00866">
    <property type="entry name" value="CPSASE_1"/>
    <property type="match status" value="2"/>
</dbReference>
<dbReference type="PROSITE" id="PS00867">
    <property type="entry name" value="CPSASE_2"/>
    <property type="match status" value="2"/>
</dbReference>
<dbReference type="PROSITE" id="PS51855">
    <property type="entry name" value="MGS"/>
    <property type="match status" value="1"/>
</dbReference>
<evidence type="ECO:0000255" key="1">
    <source>
        <dbReference type="HAMAP-Rule" id="MF_01210"/>
    </source>
</evidence>
<accession>Q3K150</accession>
<organism>
    <name type="scientific">Streptococcus agalactiae serotype Ia (strain ATCC 27591 / A909 / CDC SS700)</name>
    <dbReference type="NCBI Taxonomy" id="205921"/>
    <lineage>
        <taxon>Bacteria</taxon>
        <taxon>Bacillati</taxon>
        <taxon>Bacillota</taxon>
        <taxon>Bacilli</taxon>
        <taxon>Lactobacillales</taxon>
        <taxon>Streptococcaceae</taxon>
        <taxon>Streptococcus</taxon>
    </lineage>
</organism>
<protein>
    <recommendedName>
        <fullName evidence="1">Carbamoyl phosphate synthase large chain</fullName>
        <ecNumber evidence="1">6.3.4.16</ecNumber>
        <ecNumber evidence="1">6.3.5.5</ecNumber>
    </recommendedName>
    <alternativeName>
        <fullName evidence="1">Carbamoyl phosphate synthetase ammonia chain</fullName>
    </alternativeName>
</protein>
<sequence length="1060" mass="117061">MPKRTDIRKIMVIGSGPIVIGQAAEFDYSGTQACLSLKEEGYQVVLVNSNPATIMTDKDIADKVYIEPITLEFVTRILRKERPDALLPTLGGQTGLNMAMALSKNGILEELNVELLGTKLSAIDKAEDRDLFKQLMEELNQPIPESEIVNSVEEAIQFAEQIGYPLIVRPAFTLGGTGGGMCDNQEQLVDITTKGLKLSPVTQCLIERSIAGFKEIEYEVMRDAADNALVVCNMENFDPVGIHTGDSIVFAPAQTLSDVENQLLRDASLDIIRALKIEGGCNVQLALDPNSFKYYVIEVNPRVSRSSALASKATGYPIAKLAAKIAVGLTLDEVINPITKTTYAMFEPALDYVVAKMPRFPFDKFESGDRKLGTQMKATGEVMAIGRNIEESLLKACRSLEIGVDHIKIADLDNVSDDVLLEKIRKAEDDRLFYLAEALRRHYSIEKLASLTSIDSFFLDKLRVIVELEDLLSKNRLDINILKKVKNKGFSDKAIASLWQINEDQVRNMRKEAGILPVYKMVDTCAAEFDSATPYFYSTYAVENESLISDKASILVLGSGPIRIGQGVEFDYATVHSVKAIRESGFEAIIMNSNPETVSTDFSISDKLYFEPLTFEDVMNVIDLEKPEGVILQFGGQTAINLAKDLNKAGVKILGTQLEDLDRAENRKQFEATLQALNIPQPPGFTATTEEEAVNAAQKIGYPVLVRPSYVLGGRAMKIVENEEDLRHYMTTAVKASPDHPVLIDAYLIGKECEVDAISDGQNILIPGIMEHIERAGVHSGDSMAVYPPQTLSETIIETIVDYTKRLAIGLNCIGMMNIQFVIKDQKVYVIEVNPRASRTLPFLSKVTHIPMAQVATKVILGDKLCNFTYGYDLYPASDMVHIKAPVFSFTKLAKVDSLLGPEMKSTGEVMGSDINLQKALYKAFEAAYLHMPDYGNIVFTVDDTDKEEALELAKVYQSIGYRIYATQGTAIYFDANGLETVLVGKLGENDRNHIPDLIKNGKIQAVINTVGQNNIDNHDALIIRRSAIEQGVPLFTSLDTAHAMFKVLESRAFTLKVLD</sequence>
<reference key="1">
    <citation type="journal article" date="2005" name="Proc. Natl. Acad. Sci. U.S.A.">
        <title>Genome analysis of multiple pathogenic isolates of Streptococcus agalactiae: implications for the microbial 'pan-genome'.</title>
        <authorList>
            <person name="Tettelin H."/>
            <person name="Masignani V."/>
            <person name="Cieslewicz M.J."/>
            <person name="Donati C."/>
            <person name="Medini D."/>
            <person name="Ward N.L."/>
            <person name="Angiuoli S.V."/>
            <person name="Crabtree J."/>
            <person name="Jones A.L."/>
            <person name="Durkin A.S."/>
            <person name="DeBoy R.T."/>
            <person name="Davidsen T.M."/>
            <person name="Mora M."/>
            <person name="Scarselli M."/>
            <person name="Margarit y Ros I."/>
            <person name="Peterson J.D."/>
            <person name="Hauser C.R."/>
            <person name="Sundaram J.P."/>
            <person name="Nelson W.C."/>
            <person name="Madupu R."/>
            <person name="Brinkac L.M."/>
            <person name="Dodson R.J."/>
            <person name="Rosovitz M.J."/>
            <person name="Sullivan S.A."/>
            <person name="Daugherty S.C."/>
            <person name="Haft D.H."/>
            <person name="Selengut J."/>
            <person name="Gwinn M.L."/>
            <person name="Zhou L."/>
            <person name="Zafar N."/>
            <person name="Khouri H."/>
            <person name="Radune D."/>
            <person name="Dimitrov G."/>
            <person name="Watkins K."/>
            <person name="O'Connor K.J."/>
            <person name="Smith S."/>
            <person name="Utterback T.R."/>
            <person name="White O."/>
            <person name="Rubens C.E."/>
            <person name="Grandi G."/>
            <person name="Madoff L.C."/>
            <person name="Kasper D.L."/>
            <person name="Telford J.L."/>
            <person name="Wessels M.R."/>
            <person name="Rappuoli R."/>
            <person name="Fraser C.M."/>
        </authorList>
    </citation>
    <scope>NUCLEOTIDE SEQUENCE [LARGE SCALE GENOMIC DNA]</scope>
    <source>
        <strain>ATCC 27591 / A909 / CDC SS700</strain>
    </source>
</reference>
<comment type="function">
    <text evidence="1">Large subunit of the glutamine-dependent carbamoyl phosphate synthetase (CPSase). CPSase catalyzes the formation of carbamoyl phosphate from the ammonia moiety of glutamine, carbonate, and phosphate donated by ATP, constituting the first step of 2 biosynthetic pathways, one leading to arginine and/or urea and the other to pyrimidine nucleotides. The large subunit (synthetase) binds the substrates ammonia (free or transferred from glutamine from the small subunit), hydrogencarbonate and ATP and carries out an ATP-coupled ligase reaction, activating hydrogencarbonate by forming carboxy phosphate which reacts with ammonia to form carbamoyl phosphate.</text>
</comment>
<comment type="catalytic activity">
    <reaction evidence="1">
        <text>hydrogencarbonate + L-glutamine + 2 ATP + H2O = carbamoyl phosphate + L-glutamate + 2 ADP + phosphate + 2 H(+)</text>
        <dbReference type="Rhea" id="RHEA:18633"/>
        <dbReference type="ChEBI" id="CHEBI:15377"/>
        <dbReference type="ChEBI" id="CHEBI:15378"/>
        <dbReference type="ChEBI" id="CHEBI:17544"/>
        <dbReference type="ChEBI" id="CHEBI:29985"/>
        <dbReference type="ChEBI" id="CHEBI:30616"/>
        <dbReference type="ChEBI" id="CHEBI:43474"/>
        <dbReference type="ChEBI" id="CHEBI:58228"/>
        <dbReference type="ChEBI" id="CHEBI:58359"/>
        <dbReference type="ChEBI" id="CHEBI:456216"/>
        <dbReference type="EC" id="6.3.5.5"/>
    </reaction>
</comment>
<comment type="catalytic activity">
    <molecule>Carbamoyl phosphate synthase large chain</molecule>
    <reaction evidence="1">
        <text>hydrogencarbonate + NH4(+) + 2 ATP = carbamoyl phosphate + 2 ADP + phosphate + 2 H(+)</text>
        <dbReference type="Rhea" id="RHEA:18029"/>
        <dbReference type="ChEBI" id="CHEBI:15378"/>
        <dbReference type="ChEBI" id="CHEBI:17544"/>
        <dbReference type="ChEBI" id="CHEBI:28938"/>
        <dbReference type="ChEBI" id="CHEBI:30616"/>
        <dbReference type="ChEBI" id="CHEBI:43474"/>
        <dbReference type="ChEBI" id="CHEBI:58228"/>
        <dbReference type="ChEBI" id="CHEBI:456216"/>
        <dbReference type="EC" id="6.3.4.16"/>
    </reaction>
</comment>
<comment type="cofactor">
    <cofactor evidence="1">
        <name>Mg(2+)</name>
        <dbReference type="ChEBI" id="CHEBI:18420"/>
    </cofactor>
    <cofactor evidence="1">
        <name>Mn(2+)</name>
        <dbReference type="ChEBI" id="CHEBI:29035"/>
    </cofactor>
    <text evidence="1">Binds 4 Mg(2+) or Mn(2+) ions per subunit.</text>
</comment>
<comment type="pathway">
    <text evidence="1">Amino-acid biosynthesis; L-arginine biosynthesis; carbamoyl phosphate from bicarbonate: step 1/1.</text>
</comment>
<comment type="pathway">
    <text evidence="1">Pyrimidine metabolism; UMP biosynthesis via de novo pathway; (S)-dihydroorotate from bicarbonate: step 1/3.</text>
</comment>
<comment type="subunit">
    <text evidence="1">Composed of two chains; the small (or glutamine) chain promotes the hydrolysis of glutamine to ammonia, which is used by the large (or ammonia) chain to synthesize carbamoyl phosphate. Tetramer of heterodimers (alpha,beta)4.</text>
</comment>
<comment type="domain">
    <text evidence="1">The large subunit is composed of 2 ATP-grasp domains that are involved in binding the 2 ATP molecules needed for carbamoyl phosphate synthesis. The N-terminal ATP-grasp domain (referred to as the carboxyphosphate synthetic component) catalyzes the ATP-dependent phosphorylation of hydrogencarbonate to carboxyphosphate and the subsequent nucleophilic attack by ammonia to form a carbamate intermediate. The C-terminal ATP-grasp domain (referred to as the carbamoyl phosphate synthetic component) then catalyzes the phosphorylation of carbamate with the second ATP to form the end product carbamoyl phosphate. The reactive and unstable enzyme intermediates are sequentially channeled from one active site to the next through the interior of the protein over a distance of at least 96 A.</text>
</comment>
<comment type="similarity">
    <text evidence="1">Belongs to the CarB family.</text>
</comment>
<feature type="chain" id="PRO_1000066382" description="Carbamoyl phosphate synthase large chain">
    <location>
        <begin position="1"/>
        <end position="1060"/>
    </location>
</feature>
<feature type="domain" description="ATP-grasp 1" evidence="1">
    <location>
        <begin position="133"/>
        <end position="327"/>
    </location>
</feature>
<feature type="domain" description="ATP-grasp 2" evidence="1">
    <location>
        <begin position="671"/>
        <end position="861"/>
    </location>
</feature>
<feature type="domain" description="MGS-like" evidence="1">
    <location>
        <begin position="930"/>
        <end position="1060"/>
    </location>
</feature>
<feature type="region of interest" description="Carboxyphosphate synthetic domain" evidence="1">
    <location>
        <begin position="1"/>
        <end position="401"/>
    </location>
</feature>
<feature type="region of interest" description="Oligomerization domain" evidence="1">
    <location>
        <begin position="402"/>
        <end position="546"/>
    </location>
</feature>
<feature type="region of interest" description="Carbamoyl phosphate synthetic domain" evidence="1">
    <location>
        <begin position="547"/>
        <end position="929"/>
    </location>
</feature>
<feature type="region of interest" description="Allosteric domain" evidence="1">
    <location>
        <begin position="930"/>
        <end position="1060"/>
    </location>
</feature>
<feature type="binding site" evidence="1">
    <location>
        <position position="129"/>
    </location>
    <ligand>
        <name>ATP</name>
        <dbReference type="ChEBI" id="CHEBI:30616"/>
        <label>1</label>
    </ligand>
</feature>
<feature type="binding site" evidence="1">
    <location>
        <position position="169"/>
    </location>
    <ligand>
        <name>ATP</name>
        <dbReference type="ChEBI" id="CHEBI:30616"/>
        <label>1</label>
    </ligand>
</feature>
<feature type="binding site" evidence="1">
    <location>
        <position position="175"/>
    </location>
    <ligand>
        <name>ATP</name>
        <dbReference type="ChEBI" id="CHEBI:30616"/>
        <label>1</label>
    </ligand>
</feature>
<feature type="binding site" evidence="1">
    <location>
        <position position="176"/>
    </location>
    <ligand>
        <name>ATP</name>
        <dbReference type="ChEBI" id="CHEBI:30616"/>
        <label>1</label>
    </ligand>
</feature>
<feature type="binding site" evidence="1">
    <location>
        <position position="208"/>
    </location>
    <ligand>
        <name>ATP</name>
        <dbReference type="ChEBI" id="CHEBI:30616"/>
        <label>1</label>
    </ligand>
</feature>
<feature type="binding site" evidence="1">
    <location>
        <position position="210"/>
    </location>
    <ligand>
        <name>ATP</name>
        <dbReference type="ChEBI" id="CHEBI:30616"/>
        <label>1</label>
    </ligand>
</feature>
<feature type="binding site" evidence="1">
    <location>
        <position position="215"/>
    </location>
    <ligand>
        <name>ATP</name>
        <dbReference type="ChEBI" id="CHEBI:30616"/>
        <label>1</label>
    </ligand>
</feature>
<feature type="binding site" evidence="1">
    <location>
        <position position="241"/>
    </location>
    <ligand>
        <name>ATP</name>
        <dbReference type="ChEBI" id="CHEBI:30616"/>
        <label>1</label>
    </ligand>
</feature>
<feature type="binding site" evidence="1">
    <location>
        <position position="242"/>
    </location>
    <ligand>
        <name>ATP</name>
        <dbReference type="ChEBI" id="CHEBI:30616"/>
        <label>1</label>
    </ligand>
</feature>
<feature type="binding site" evidence="1">
    <location>
        <position position="243"/>
    </location>
    <ligand>
        <name>ATP</name>
        <dbReference type="ChEBI" id="CHEBI:30616"/>
        <label>1</label>
    </ligand>
</feature>
<feature type="binding site" evidence="1">
    <location>
        <position position="284"/>
    </location>
    <ligand>
        <name>ATP</name>
        <dbReference type="ChEBI" id="CHEBI:30616"/>
        <label>1</label>
    </ligand>
</feature>
<feature type="binding site" evidence="1">
    <location>
        <position position="284"/>
    </location>
    <ligand>
        <name>Mg(2+)</name>
        <dbReference type="ChEBI" id="CHEBI:18420"/>
        <label>1</label>
    </ligand>
</feature>
<feature type="binding site" evidence="1">
    <location>
        <position position="284"/>
    </location>
    <ligand>
        <name>Mn(2+)</name>
        <dbReference type="ChEBI" id="CHEBI:29035"/>
        <label>1</label>
    </ligand>
</feature>
<feature type="binding site" evidence="1">
    <location>
        <position position="298"/>
    </location>
    <ligand>
        <name>ATP</name>
        <dbReference type="ChEBI" id="CHEBI:30616"/>
        <label>1</label>
    </ligand>
</feature>
<feature type="binding site" evidence="1">
    <location>
        <position position="298"/>
    </location>
    <ligand>
        <name>Mg(2+)</name>
        <dbReference type="ChEBI" id="CHEBI:18420"/>
        <label>1</label>
    </ligand>
</feature>
<feature type="binding site" evidence="1">
    <location>
        <position position="298"/>
    </location>
    <ligand>
        <name>Mg(2+)</name>
        <dbReference type="ChEBI" id="CHEBI:18420"/>
        <label>2</label>
    </ligand>
</feature>
<feature type="binding site" evidence="1">
    <location>
        <position position="298"/>
    </location>
    <ligand>
        <name>Mn(2+)</name>
        <dbReference type="ChEBI" id="CHEBI:29035"/>
        <label>1</label>
    </ligand>
</feature>
<feature type="binding site" evidence="1">
    <location>
        <position position="298"/>
    </location>
    <ligand>
        <name>Mn(2+)</name>
        <dbReference type="ChEBI" id="CHEBI:29035"/>
        <label>2</label>
    </ligand>
</feature>
<feature type="binding site" evidence="1">
    <location>
        <position position="300"/>
    </location>
    <ligand>
        <name>Mg(2+)</name>
        <dbReference type="ChEBI" id="CHEBI:18420"/>
        <label>2</label>
    </ligand>
</feature>
<feature type="binding site" evidence="1">
    <location>
        <position position="300"/>
    </location>
    <ligand>
        <name>Mn(2+)</name>
        <dbReference type="ChEBI" id="CHEBI:29035"/>
        <label>2</label>
    </ligand>
</feature>
<feature type="binding site" evidence="1">
    <location>
        <position position="707"/>
    </location>
    <ligand>
        <name>ATP</name>
        <dbReference type="ChEBI" id="CHEBI:30616"/>
        <label>2</label>
    </ligand>
</feature>
<feature type="binding site" evidence="1">
    <location>
        <position position="746"/>
    </location>
    <ligand>
        <name>ATP</name>
        <dbReference type="ChEBI" id="CHEBI:30616"/>
        <label>2</label>
    </ligand>
</feature>
<feature type="binding site" evidence="1">
    <location>
        <position position="748"/>
    </location>
    <ligand>
        <name>ATP</name>
        <dbReference type="ChEBI" id="CHEBI:30616"/>
        <label>2</label>
    </ligand>
</feature>
<feature type="binding site" evidence="1">
    <location>
        <position position="752"/>
    </location>
    <ligand>
        <name>ATP</name>
        <dbReference type="ChEBI" id="CHEBI:30616"/>
        <label>2</label>
    </ligand>
</feature>
<feature type="binding site" evidence="1">
    <location>
        <position position="777"/>
    </location>
    <ligand>
        <name>ATP</name>
        <dbReference type="ChEBI" id="CHEBI:30616"/>
        <label>2</label>
    </ligand>
</feature>
<feature type="binding site" evidence="1">
    <location>
        <position position="778"/>
    </location>
    <ligand>
        <name>ATP</name>
        <dbReference type="ChEBI" id="CHEBI:30616"/>
        <label>2</label>
    </ligand>
</feature>
<feature type="binding site" evidence="1">
    <location>
        <position position="779"/>
    </location>
    <ligand>
        <name>ATP</name>
        <dbReference type="ChEBI" id="CHEBI:30616"/>
        <label>2</label>
    </ligand>
</feature>
<feature type="binding site" evidence="1">
    <location>
        <position position="780"/>
    </location>
    <ligand>
        <name>ATP</name>
        <dbReference type="ChEBI" id="CHEBI:30616"/>
        <label>2</label>
    </ligand>
</feature>
<feature type="binding site" evidence="1">
    <location>
        <position position="820"/>
    </location>
    <ligand>
        <name>ATP</name>
        <dbReference type="ChEBI" id="CHEBI:30616"/>
        <label>2</label>
    </ligand>
</feature>
<feature type="binding site" evidence="1">
    <location>
        <position position="820"/>
    </location>
    <ligand>
        <name>Mg(2+)</name>
        <dbReference type="ChEBI" id="CHEBI:18420"/>
        <label>3</label>
    </ligand>
</feature>
<feature type="binding site" evidence="1">
    <location>
        <position position="820"/>
    </location>
    <ligand>
        <name>Mn(2+)</name>
        <dbReference type="ChEBI" id="CHEBI:29035"/>
        <label>3</label>
    </ligand>
</feature>
<feature type="binding site" evidence="1">
    <location>
        <position position="832"/>
    </location>
    <ligand>
        <name>ATP</name>
        <dbReference type="ChEBI" id="CHEBI:30616"/>
        <label>2</label>
    </ligand>
</feature>
<feature type="binding site" evidence="1">
    <location>
        <position position="832"/>
    </location>
    <ligand>
        <name>Mg(2+)</name>
        <dbReference type="ChEBI" id="CHEBI:18420"/>
        <label>3</label>
    </ligand>
</feature>
<feature type="binding site" evidence="1">
    <location>
        <position position="832"/>
    </location>
    <ligand>
        <name>Mg(2+)</name>
        <dbReference type="ChEBI" id="CHEBI:18420"/>
        <label>4</label>
    </ligand>
</feature>
<feature type="binding site" evidence="1">
    <location>
        <position position="832"/>
    </location>
    <ligand>
        <name>Mn(2+)</name>
        <dbReference type="ChEBI" id="CHEBI:29035"/>
        <label>3</label>
    </ligand>
</feature>
<feature type="binding site" evidence="1">
    <location>
        <position position="832"/>
    </location>
    <ligand>
        <name>Mn(2+)</name>
        <dbReference type="ChEBI" id="CHEBI:29035"/>
        <label>4</label>
    </ligand>
</feature>
<feature type="binding site" evidence="1">
    <location>
        <position position="834"/>
    </location>
    <ligand>
        <name>Mg(2+)</name>
        <dbReference type="ChEBI" id="CHEBI:18420"/>
        <label>4</label>
    </ligand>
</feature>
<feature type="binding site" evidence="1">
    <location>
        <position position="834"/>
    </location>
    <ligand>
        <name>Mn(2+)</name>
        <dbReference type="ChEBI" id="CHEBI:29035"/>
        <label>4</label>
    </ligand>
</feature>
<proteinExistence type="inferred from homology"/>
<name>CARB_STRA1</name>